<proteinExistence type="inferred from homology"/>
<name>RL37_SACI1</name>
<keyword id="KW-0479">Metal-binding</keyword>
<keyword id="KW-0687">Ribonucleoprotein</keyword>
<keyword id="KW-0689">Ribosomal protein</keyword>
<keyword id="KW-0694">RNA-binding</keyword>
<keyword id="KW-0699">rRNA-binding</keyword>
<keyword id="KW-0862">Zinc</keyword>
<keyword id="KW-0863">Zinc-finger</keyword>
<comment type="function">
    <text evidence="1">Binds to the 23S rRNA.</text>
</comment>
<comment type="cofactor">
    <cofactor evidence="1">
        <name>Zn(2+)</name>
        <dbReference type="ChEBI" id="CHEBI:29105"/>
    </cofactor>
    <text evidence="1">Binds 1 zinc ion per subunit.</text>
</comment>
<comment type="similarity">
    <text evidence="1">Belongs to the eukaryotic ribosomal protein eL37 family.</text>
</comment>
<reference key="1">
    <citation type="journal article" date="2009" name="Proc. Natl. Acad. Sci. U.S.A.">
        <title>Biogeography of the Sulfolobus islandicus pan-genome.</title>
        <authorList>
            <person name="Reno M.L."/>
            <person name="Held N.L."/>
            <person name="Fields C.J."/>
            <person name="Burke P.V."/>
            <person name="Whitaker R.J."/>
        </authorList>
    </citation>
    <scope>NUCLEOTIDE SEQUENCE [LARGE SCALE GENOMIC DNA]</scope>
    <source>
        <strain>Y.N.15.51 / Yellowstone #2</strain>
    </source>
</reference>
<sequence length="61" mass="7099">MKGTPSFGKINKSHTHIRCRRCGRNAYNVSKHYCAACGFGKTKKIRRYSWQNKKVNGVRIR</sequence>
<accession>C3NHE2</accession>
<gene>
    <name evidence="1" type="primary">rpl37e</name>
    <name type="ordered locus">YN1551_1462</name>
</gene>
<protein>
    <recommendedName>
        <fullName evidence="1">Large ribosomal subunit protein eL37</fullName>
    </recommendedName>
    <alternativeName>
        <fullName evidence="2">50S ribosomal protein L37e</fullName>
    </alternativeName>
</protein>
<organism>
    <name type="scientific">Saccharolobus islandicus (strain Y.N.15.51 / Yellowstone #2)</name>
    <name type="common">Sulfolobus islandicus</name>
    <dbReference type="NCBI Taxonomy" id="419942"/>
    <lineage>
        <taxon>Archaea</taxon>
        <taxon>Thermoproteota</taxon>
        <taxon>Thermoprotei</taxon>
        <taxon>Sulfolobales</taxon>
        <taxon>Sulfolobaceae</taxon>
        <taxon>Saccharolobus</taxon>
    </lineage>
</organism>
<feature type="chain" id="PRO_1000211973" description="Large ribosomal subunit protein eL37">
    <location>
        <begin position="1"/>
        <end position="61"/>
    </location>
</feature>
<feature type="zinc finger region" description="C4-type" evidence="1">
    <location>
        <begin position="19"/>
        <end position="37"/>
    </location>
</feature>
<feature type="binding site" evidence="1">
    <location>
        <position position="19"/>
    </location>
    <ligand>
        <name>Zn(2+)</name>
        <dbReference type="ChEBI" id="CHEBI:29105"/>
    </ligand>
</feature>
<feature type="binding site" evidence="1">
    <location>
        <position position="22"/>
    </location>
    <ligand>
        <name>Zn(2+)</name>
        <dbReference type="ChEBI" id="CHEBI:29105"/>
    </ligand>
</feature>
<feature type="binding site" evidence="1">
    <location>
        <position position="34"/>
    </location>
    <ligand>
        <name>Zn(2+)</name>
        <dbReference type="ChEBI" id="CHEBI:29105"/>
    </ligand>
</feature>
<feature type="binding site" evidence="1">
    <location>
        <position position="37"/>
    </location>
    <ligand>
        <name>Zn(2+)</name>
        <dbReference type="ChEBI" id="CHEBI:29105"/>
    </ligand>
</feature>
<dbReference type="EMBL" id="CP001404">
    <property type="protein sequence ID" value="ACP48552.1"/>
    <property type="molecule type" value="Genomic_DNA"/>
</dbReference>
<dbReference type="RefSeq" id="WP_012717451.1">
    <property type="nucleotide sequence ID" value="NC_012623.1"/>
</dbReference>
<dbReference type="SMR" id="C3NHE2"/>
<dbReference type="GeneID" id="31485670"/>
<dbReference type="KEGG" id="sin:YN1551_1462"/>
<dbReference type="HOGENOM" id="CLU_208825_0_0_2"/>
<dbReference type="Proteomes" id="UP000006818">
    <property type="component" value="Chromosome"/>
</dbReference>
<dbReference type="GO" id="GO:1990904">
    <property type="term" value="C:ribonucleoprotein complex"/>
    <property type="evidence" value="ECO:0007669"/>
    <property type="project" value="UniProtKB-KW"/>
</dbReference>
<dbReference type="GO" id="GO:0005840">
    <property type="term" value="C:ribosome"/>
    <property type="evidence" value="ECO:0007669"/>
    <property type="project" value="UniProtKB-KW"/>
</dbReference>
<dbReference type="GO" id="GO:0019843">
    <property type="term" value="F:rRNA binding"/>
    <property type="evidence" value="ECO:0007669"/>
    <property type="project" value="UniProtKB-KW"/>
</dbReference>
<dbReference type="GO" id="GO:0003735">
    <property type="term" value="F:structural constituent of ribosome"/>
    <property type="evidence" value="ECO:0007669"/>
    <property type="project" value="InterPro"/>
</dbReference>
<dbReference type="GO" id="GO:0008270">
    <property type="term" value="F:zinc ion binding"/>
    <property type="evidence" value="ECO:0007669"/>
    <property type="project" value="UniProtKB-UniRule"/>
</dbReference>
<dbReference type="GO" id="GO:0006412">
    <property type="term" value="P:translation"/>
    <property type="evidence" value="ECO:0007669"/>
    <property type="project" value="UniProtKB-UniRule"/>
</dbReference>
<dbReference type="FunFam" id="2.20.25.30:FF:000003">
    <property type="entry name" value="50S ribosomal protein L37e"/>
    <property type="match status" value="1"/>
</dbReference>
<dbReference type="Gene3D" id="2.20.25.30">
    <property type="match status" value="1"/>
</dbReference>
<dbReference type="HAMAP" id="MF_00547">
    <property type="entry name" value="Ribosomal_eL37"/>
    <property type="match status" value="1"/>
</dbReference>
<dbReference type="InterPro" id="IPR001569">
    <property type="entry name" value="Ribosomal_eL37"/>
</dbReference>
<dbReference type="InterPro" id="IPR011331">
    <property type="entry name" value="Ribosomal_eL37/eL43"/>
</dbReference>
<dbReference type="InterPro" id="IPR018267">
    <property type="entry name" value="Ribosomal_eL37_CS"/>
</dbReference>
<dbReference type="InterPro" id="IPR011332">
    <property type="entry name" value="Ribosomal_zn-bd"/>
</dbReference>
<dbReference type="NCBIfam" id="NF003214">
    <property type="entry name" value="PRK04179.1"/>
    <property type="match status" value="1"/>
</dbReference>
<dbReference type="Pfam" id="PF01907">
    <property type="entry name" value="Ribosomal_L37e"/>
    <property type="match status" value="1"/>
</dbReference>
<dbReference type="SUPFAM" id="SSF57829">
    <property type="entry name" value="Zn-binding ribosomal proteins"/>
    <property type="match status" value="1"/>
</dbReference>
<dbReference type="PROSITE" id="PS01077">
    <property type="entry name" value="RIBOSOMAL_L37E"/>
    <property type="match status" value="1"/>
</dbReference>
<evidence type="ECO:0000255" key="1">
    <source>
        <dbReference type="HAMAP-Rule" id="MF_00547"/>
    </source>
</evidence>
<evidence type="ECO:0000305" key="2"/>